<proteinExistence type="inferred from homology"/>
<organism>
    <name type="scientific">Aspergillus niger (strain ATCC MYA-4892 / CBS 513.88 / FGSC A1513)</name>
    <dbReference type="NCBI Taxonomy" id="425011"/>
    <lineage>
        <taxon>Eukaryota</taxon>
        <taxon>Fungi</taxon>
        <taxon>Dikarya</taxon>
        <taxon>Ascomycota</taxon>
        <taxon>Pezizomycotina</taxon>
        <taxon>Eurotiomycetes</taxon>
        <taxon>Eurotiomycetidae</taxon>
        <taxon>Eurotiales</taxon>
        <taxon>Aspergillaceae</taxon>
        <taxon>Aspergillus</taxon>
        <taxon>Aspergillus subgen. Circumdati</taxon>
    </lineage>
</organism>
<accession>A2R065</accession>
<keyword id="KW-0143">Chaperone</keyword>
<keyword id="KW-0175">Coiled coil</keyword>
<keyword id="KW-0472">Membrane</keyword>
<keyword id="KW-0496">Mitochondrion</keyword>
<keyword id="KW-0999">Mitochondrion inner membrane</keyword>
<keyword id="KW-1185">Reference proteome</keyword>
<keyword id="KW-0812">Transmembrane</keyword>
<keyword id="KW-1133">Transmembrane helix</keyword>
<comment type="function">
    <text evidence="1">Essential for the assembly of ubiquinol-cytochrome c reductase. It has a direct effect on the correct occurrence of the Rieske protein, core 4, core 5 and apocytochrome b (By similarity).</text>
</comment>
<comment type="subcellular location">
    <subcellularLocation>
        <location evidence="1">Mitochondrion inner membrane</location>
        <topology evidence="1">Single-pass membrane protein</topology>
    </subcellularLocation>
</comment>
<comment type="similarity">
    <text evidence="4">Belongs to the CBP4 family.</text>
</comment>
<comment type="sequence caution" evidence="4">
    <conflict type="erroneous gene model prediction">
        <sequence resource="EMBL-CDS" id="CAK46379"/>
    </conflict>
</comment>
<protein>
    <recommendedName>
        <fullName>Assembly factor cbp4</fullName>
    </recommendedName>
    <alternativeName>
        <fullName>Cytochrome b mRNA-processing protein 4</fullName>
    </alternativeName>
</protein>
<feature type="chain" id="PRO_0000330119" description="Assembly factor cbp4">
    <location>
        <begin position="1"/>
        <end position="116"/>
    </location>
</feature>
<feature type="transmembrane region" description="Helical" evidence="2">
    <location>
        <begin position="7"/>
        <end position="29"/>
    </location>
</feature>
<feature type="region of interest" description="Disordered" evidence="3">
    <location>
        <begin position="88"/>
        <end position="116"/>
    </location>
</feature>
<feature type="coiled-coil region" evidence="2">
    <location>
        <begin position="78"/>
        <end position="112"/>
    </location>
</feature>
<sequence length="116" mass="13770">MSRAGTWMKMLGVGIVICVGGPAFVQYIRPTDEELFKRYNPDLQKRSLEEGDRRAREFDEYVTRLKQWSKSDKSIWYAAQEQQEQKRVEAEVQRNQARDDAKVQREEMRKELLGEK</sequence>
<evidence type="ECO:0000250" key="1"/>
<evidence type="ECO:0000255" key="2"/>
<evidence type="ECO:0000256" key="3">
    <source>
        <dbReference type="SAM" id="MobiDB-lite"/>
    </source>
</evidence>
<evidence type="ECO:0000305" key="4"/>
<dbReference type="EMBL" id="AM270279">
    <property type="protein sequence ID" value="CAK46379.1"/>
    <property type="status" value="ALT_SEQ"/>
    <property type="molecule type" value="Genomic_DNA"/>
</dbReference>
<dbReference type="RefSeq" id="XP_001395804.2">
    <property type="nucleotide sequence ID" value="XM_001395767.2"/>
</dbReference>
<dbReference type="SMR" id="A2R065"/>
<dbReference type="EnsemblFungi" id="CAK46379">
    <property type="protein sequence ID" value="CAK46379"/>
    <property type="gene ID" value="An12g07550"/>
</dbReference>
<dbReference type="GeneID" id="4986104"/>
<dbReference type="KEGG" id="ang:An12g07550"/>
<dbReference type="Proteomes" id="UP000006706">
    <property type="component" value="Chromosome 3L"/>
</dbReference>
<dbReference type="GO" id="GO:0005743">
    <property type="term" value="C:mitochondrial inner membrane"/>
    <property type="evidence" value="ECO:0007669"/>
    <property type="project" value="UniProtKB-SubCell"/>
</dbReference>
<dbReference type="GO" id="GO:0034551">
    <property type="term" value="P:mitochondrial respiratory chain complex III assembly"/>
    <property type="evidence" value="ECO:0007669"/>
    <property type="project" value="TreeGrafter"/>
</dbReference>
<dbReference type="InterPro" id="IPR012420">
    <property type="entry name" value="Cbp4"/>
</dbReference>
<dbReference type="PANTHER" id="PTHR28202">
    <property type="entry name" value="ASSEMBLY FACTOR CBP4"/>
    <property type="match status" value="1"/>
</dbReference>
<dbReference type="PANTHER" id="PTHR28202:SF1">
    <property type="entry name" value="ASSEMBLY FACTOR CBP4"/>
    <property type="match status" value="1"/>
</dbReference>
<dbReference type="Pfam" id="PF07960">
    <property type="entry name" value="CBP4"/>
    <property type="match status" value="1"/>
</dbReference>
<reference key="1">
    <citation type="journal article" date="2007" name="Nat. Biotechnol.">
        <title>Genome sequencing and analysis of the versatile cell factory Aspergillus niger CBS 513.88.</title>
        <authorList>
            <person name="Pel H.J."/>
            <person name="de Winde J.H."/>
            <person name="Archer D.B."/>
            <person name="Dyer P.S."/>
            <person name="Hofmann G."/>
            <person name="Schaap P.J."/>
            <person name="Turner G."/>
            <person name="de Vries R.P."/>
            <person name="Albang R."/>
            <person name="Albermann K."/>
            <person name="Andersen M.R."/>
            <person name="Bendtsen J.D."/>
            <person name="Benen J.A.E."/>
            <person name="van den Berg M."/>
            <person name="Breestraat S."/>
            <person name="Caddick M.X."/>
            <person name="Contreras R."/>
            <person name="Cornell M."/>
            <person name="Coutinho P.M."/>
            <person name="Danchin E.G.J."/>
            <person name="Debets A.J.M."/>
            <person name="Dekker P."/>
            <person name="van Dijck P.W.M."/>
            <person name="van Dijk A."/>
            <person name="Dijkhuizen L."/>
            <person name="Driessen A.J.M."/>
            <person name="d'Enfert C."/>
            <person name="Geysens S."/>
            <person name="Goosen C."/>
            <person name="Groot G.S.P."/>
            <person name="de Groot P.W.J."/>
            <person name="Guillemette T."/>
            <person name="Henrissat B."/>
            <person name="Herweijer M."/>
            <person name="van den Hombergh J.P.T.W."/>
            <person name="van den Hondel C.A.M.J.J."/>
            <person name="van der Heijden R.T.J.M."/>
            <person name="van der Kaaij R.M."/>
            <person name="Klis F.M."/>
            <person name="Kools H.J."/>
            <person name="Kubicek C.P."/>
            <person name="van Kuyk P.A."/>
            <person name="Lauber J."/>
            <person name="Lu X."/>
            <person name="van der Maarel M.J.E.C."/>
            <person name="Meulenberg R."/>
            <person name="Menke H."/>
            <person name="Mortimer M.A."/>
            <person name="Nielsen J."/>
            <person name="Oliver S.G."/>
            <person name="Olsthoorn M."/>
            <person name="Pal K."/>
            <person name="van Peij N.N.M.E."/>
            <person name="Ram A.F.J."/>
            <person name="Rinas U."/>
            <person name="Roubos J.A."/>
            <person name="Sagt C.M.J."/>
            <person name="Schmoll M."/>
            <person name="Sun J."/>
            <person name="Ussery D."/>
            <person name="Varga J."/>
            <person name="Vervecken W."/>
            <person name="van de Vondervoort P.J.J."/>
            <person name="Wedler H."/>
            <person name="Woesten H.A.B."/>
            <person name="Zeng A.-P."/>
            <person name="van Ooyen A.J.J."/>
            <person name="Visser J."/>
            <person name="Stam H."/>
        </authorList>
    </citation>
    <scope>NUCLEOTIDE SEQUENCE [LARGE SCALE GENOMIC DNA]</scope>
    <source>
        <strain>ATCC MYA-4892 / CBS 513.88 / FGSC A1513</strain>
    </source>
</reference>
<gene>
    <name type="primary">cbp4</name>
    <name type="ORF">An12g07550</name>
</gene>
<name>CBP4_ASPNC</name>